<proteinExistence type="evidence at transcript level"/>
<protein>
    <recommendedName>
        <fullName evidence="8">C2H2 type master regulator of conidiophore development brlA</fullName>
    </recommendedName>
</protein>
<organism>
    <name type="scientific">Penicillium digitatum (strain PHI26 / CECT 20796)</name>
    <name type="common">Green mold</name>
    <dbReference type="NCBI Taxonomy" id="1170229"/>
    <lineage>
        <taxon>Eukaryota</taxon>
        <taxon>Fungi</taxon>
        <taxon>Dikarya</taxon>
        <taxon>Ascomycota</taxon>
        <taxon>Pezizomycotina</taxon>
        <taxon>Eurotiomycetes</taxon>
        <taxon>Eurotiomycetidae</taxon>
        <taxon>Eurotiales</taxon>
        <taxon>Aspergillaceae</taxon>
        <taxon>Penicillium</taxon>
    </lineage>
</organism>
<keyword id="KW-0010">Activator</keyword>
<keyword id="KW-0183">Conidiation</keyword>
<keyword id="KW-0238">DNA-binding</keyword>
<keyword id="KW-0479">Metal-binding</keyword>
<keyword id="KW-0539">Nucleus</keyword>
<keyword id="KW-1185">Reference proteome</keyword>
<keyword id="KW-0677">Repeat</keyword>
<keyword id="KW-0749">Sporulation</keyword>
<keyword id="KW-0804">Transcription</keyword>
<keyword id="KW-0805">Transcription regulation</keyword>
<keyword id="KW-0862">Zinc</keyword>
<keyword id="KW-0863">Zinc-finger</keyword>
<gene>
    <name evidence="7" type="primary">brlA</name>
    <name type="ORF">PDIG_36150</name>
</gene>
<sequence>MRSHGQQISDRLTVEVDCHSLGPSDCPSMTSSFSPLDSPTPTPTSLYSQSSMASPVWHEHSHYHHGLPMERRTSATPLRSAFRMTDLTAGDGMMNMPCGHMDRQEQMPLPDYLPGYDDNVEQLWIPQEMPKTYQEPQFPYQASMPQYNQMARNYYHRPQQAGYLPESASNPCLSRPIFTQPMERMPNSASMTNMLHWMPSHESLVPQTITPAQVQPYPSGPVTPPSSAYSDFPTNIPTFKSHTPSTPHRSVSMGTPSGSDTPVSRISGHNDYQEEFQLSPVYREGMMQRHRQPSRKPSKKQLLRSNLSLENLPSIIKQVQFKCKEPGCKGRFKRQEHLKRHMKSHSKEKPHVCWVPGCHRAFSRSDNLNAHYTKTHSKRGGRNRYVATLDETSQDFDPDFRGQLTPDGRPIYGSKLEDSMPDCGELSVDGWDD</sequence>
<dbReference type="EMBL" id="JX298844">
    <property type="protein sequence ID" value="AFS18466.1"/>
    <property type="molecule type" value="mRNA"/>
</dbReference>
<dbReference type="EMBL" id="AKCT01000153">
    <property type="protein sequence ID" value="EKV13796.1"/>
    <property type="status" value="ALT_SEQ"/>
    <property type="molecule type" value="Genomic_DNA"/>
</dbReference>
<dbReference type="SMR" id="K9GKQ6"/>
<dbReference type="STRING" id="1170229.K9GKQ6"/>
<dbReference type="eggNOG" id="KOG1721">
    <property type="taxonomic scope" value="Eukaryota"/>
</dbReference>
<dbReference type="HOGENOM" id="CLU_655506_0_0_1"/>
<dbReference type="InParanoid" id="K9GKQ6"/>
<dbReference type="OrthoDB" id="49390at5073"/>
<dbReference type="Proteomes" id="UP000009882">
    <property type="component" value="Unassembled WGS sequence"/>
</dbReference>
<dbReference type="GO" id="GO:0000785">
    <property type="term" value="C:chromatin"/>
    <property type="evidence" value="ECO:0007669"/>
    <property type="project" value="TreeGrafter"/>
</dbReference>
<dbReference type="GO" id="GO:0005634">
    <property type="term" value="C:nucleus"/>
    <property type="evidence" value="ECO:0007669"/>
    <property type="project" value="UniProtKB-SubCell"/>
</dbReference>
<dbReference type="GO" id="GO:0005667">
    <property type="term" value="C:transcription regulator complex"/>
    <property type="evidence" value="ECO:0007669"/>
    <property type="project" value="TreeGrafter"/>
</dbReference>
<dbReference type="GO" id="GO:0000981">
    <property type="term" value="F:DNA-binding transcription factor activity, RNA polymerase II-specific"/>
    <property type="evidence" value="ECO:0007669"/>
    <property type="project" value="TreeGrafter"/>
</dbReference>
<dbReference type="GO" id="GO:0000978">
    <property type="term" value="F:RNA polymerase II cis-regulatory region sequence-specific DNA binding"/>
    <property type="evidence" value="ECO:0007669"/>
    <property type="project" value="TreeGrafter"/>
</dbReference>
<dbReference type="GO" id="GO:0008270">
    <property type="term" value="F:zinc ion binding"/>
    <property type="evidence" value="ECO:0007669"/>
    <property type="project" value="UniProtKB-KW"/>
</dbReference>
<dbReference type="GO" id="GO:0048315">
    <property type="term" value="P:conidium formation"/>
    <property type="evidence" value="ECO:0007669"/>
    <property type="project" value="UniProtKB-KW"/>
</dbReference>
<dbReference type="GO" id="GO:0030435">
    <property type="term" value="P:sporulation resulting in formation of a cellular spore"/>
    <property type="evidence" value="ECO:0007669"/>
    <property type="project" value="UniProtKB-KW"/>
</dbReference>
<dbReference type="FunFam" id="3.30.160.60:FF:000845">
    <property type="entry name" value="C2H2 type conidiation transcription factor BrlA"/>
    <property type="match status" value="1"/>
</dbReference>
<dbReference type="Gene3D" id="3.30.160.60">
    <property type="entry name" value="Classic Zinc Finger"/>
    <property type="match status" value="2"/>
</dbReference>
<dbReference type="InterPro" id="IPR036236">
    <property type="entry name" value="Znf_C2H2_sf"/>
</dbReference>
<dbReference type="InterPro" id="IPR013087">
    <property type="entry name" value="Znf_C2H2_type"/>
</dbReference>
<dbReference type="PANTHER" id="PTHR14003">
    <property type="entry name" value="TRANSCRIPTIONAL REPRESSOR PROTEIN YY"/>
    <property type="match status" value="1"/>
</dbReference>
<dbReference type="PANTHER" id="PTHR14003:SF19">
    <property type="entry name" value="YY2 TRANSCRIPTION FACTOR"/>
    <property type="match status" value="1"/>
</dbReference>
<dbReference type="Pfam" id="PF00096">
    <property type="entry name" value="zf-C2H2"/>
    <property type="match status" value="2"/>
</dbReference>
<dbReference type="SMART" id="SM00355">
    <property type="entry name" value="ZnF_C2H2"/>
    <property type="match status" value="2"/>
</dbReference>
<dbReference type="SUPFAM" id="SSF57667">
    <property type="entry name" value="beta-beta-alpha zinc fingers"/>
    <property type="match status" value="1"/>
</dbReference>
<dbReference type="PROSITE" id="PS00028">
    <property type="entry name" value="ZINC_FINGER_C2H2_1"/>
    <property type="match status" value="2"/>
</dbReference>
<dbReference type="PROSITE" id="PS50157">
    <property type="entry name" value="ZINC_FINGER_C2H2_2"/>
    <property type="match status" value="2"/>
</dbReference>
<reference key="1">
    <citation type="journal article" date="2013" name="Appl. Microbiol. Biotechnol.">
        <title>PdSNF1, a sucrose non-fermenting protein kinase gene, is required for Penicillium digitatum conidiation and virulence.</title>
        <authorList>
            <person name="Zhang T."/>
            <person name="Sun X."/>
            <person name="Xu Q."/>
            <person name="Zhu C."/>
            <person name="Li Q."/>
            <person name="Li H."/>
        </authorList>
    </citation>
    <scope>NUCLEOTIDE SEQUENCE [MRNA]</scope>
    <scope>INDUCTION</scope>
</reference>
<reference key="2">
    <citation type="journal article" date="2012" name="BMC Genomics">
        <title>Genome sequence of the necrotrophic fungus Penicillium digitatum, the main postharvest pathogen of citrus.</title>
        <authorList>
            <person name="Marcet-Houben M."/>
            <person name="Ballester A.-R."/>
            <person name="de la Fuente B."/>
            <person name="Harries E."/>
            <person name="Marcos J.F."/>
            <person name="Gonzalez-Candelas L."/>
            <person name="Gabaldon T."/>
        </authorList>
    </citation>
    <scope>NUCLEOTIDE SEQUENCE [LARGE SCALE GENOMIC DNA]</scope>
    <source>
        <strain>PHI26 / CECT 20796</strain>
    </source>
</reference>
<reference key="3">
    <citation type="journal article" date="2015" name="Res. Microbiol.">
        <title>PdbrlA, PdabaA and PdwetA control distinct stages of conidiogenesis in Penicillium digitatum.</title>
        <authorList>
            <person name="Wang M."/>
            <person name="Sun X."/>
            <person name="Zhu C."/>
            <person name="Xu Q."/>
            <person name="Ruan R."/>
            <person name="Yu D."/>
            <person name="Li H."/>
        </authorList>
    </citation>
    <scope>FUNCTION</scope>
    <scope>DISRUPTION PHENOTYPE</scope>
</reference>
<evidence type="ECO:0000250" key="1">
    <source>
        <dbReference type="UniProtKB" id="P10069"/>
    </source>
</evidence>
<evidence type="ECO:0000250" key="2">
    <source>
        <dbReference type="UniProtKB" id="P22022"/>
    </source>
</evidence>
<evidence type="ECO:0000255" key="3">
    <source>
        <dbReference type="PROSITE-ProRule" id="PRU00042"/>
    </source>
</evidence>
<evidence type="ECO:0000256" key="4">
    <source>
        <dbReference type="SAM" id="MobiDB-lite"/>
    </source>
</evidence>
<evidence type="ECO:0000269" key="5">
    <source>
    </source>
</evidence>
<evidence type="ECO:0000269" key="6">
    <source>
    </source>
</evidence>
<evidence type="ECO:0000303" key="7">
    <source>
    </source>
</evidence>
<evidence type="ECO:0000305" key="8"/>
<comment type="function">
    <text evidence="2 6">BrlA, abaA and wetA are pivotal regulators of conidiophore development and conidium maturation (PubMed:25530311). They act individually and together to regulate their own expression and that of numerous other sporulation-specific genes (By similarity). Binds promoters of target genes at brlA response elements (BREs) containing the conserved sequence 5'-(C/A)(A/G)AGGG(G/A)-3' (By similarity). Regulates genes involved in conidiogenesis (PubMed:25530311).</text>
</comment>
<comment type="subcellular location">
    <subcellularLocation>
        <location evidence="1">Nucleus</location>
    </subcellularLocation>
</comment>
<comment type="induction">
    <text evidence="5">Expression is positively regulated by SNF1 (PubMed:23296496).</text>
</comment>
<comment type="disruption phenotype">
    <text evidence="6">Completely destroys asexual development, resulting in masses of vegetative hyphae that branched into the air and formation of white cotton-like colonies (PubMed:25530311).</text>
</comment>
<comment type="sequence caution" evidence="8">
    <conflict type="erroneous gene model prediction">
        <sequence resource="EMBL-CDS" id="EKV13796"/>
    </conflict>
</comment>
<name>BRLA_PEND2</name>
<feature type="chain" id="PRO_0000435946" description="C2H2 type master regulator of conidiophore development brlA">
    <location>
        <begin position="1"/>
        <end position="433"/>
    </location>
</feature>
<feature type="zinc finger region" description="C2H2-type 1" evidence="3">
    <location>
        <begin position="321"/>
        <end position="345"/>
    </location>
</feature>
<feature type="zinc finger region" description="C2H2-type 2" evidence="3">
    <location>
        <begin position="351"/>
        <end position="376"/>
    </location>
</feature>
<feature type="region of interest" description="Disordered" evidence="4">
    <location>
        <begin position="24"/>
        <end position="49"/>
    </location>
</feature>
<feature type="region of interest" description="Disordered" evidence="4">
    <location>
        <begin position="240"/>
        <end position="269"/>
    </location>
</feature>
<feature type="region of interest" description="Disordered" evidence="4">
    <location>
        <begin position="286"/>
        <end position="306"/>
    </location>
</feature>
<feature type="region of interest" description="Disordered" evidence="4">
    <location>
        <begin position="391"/>
        <end position="423"/>
    </location>
</feature>
<feature type="compositionally biased region" description="Low complexity" evidence="4">
    <location>
        <begin position="30"/>
        <end position="49"/>
    </location>
</feature>
<feature type="compositionally biased region" description="Polar residues" evidence="4">
    <location>
        <begin position="240"/>
        <end position="264"/>
    </location>
</feature>
<feature type="compositionally biased region" description="Basic residues" evidence="4">
    <location>
        <begin position="288"/>
        <end position="302"/>
    </location>
</feature>
<accession>K9GKQ6</accession>
<accession>J9WMK0</accession>